<protein>
    <recommendedName>
        <fullName evidence="1">Disulfide bond formation protein B</fullName>
    </recommendedName>
    <alternativeName>
        <fullName evidence="1">Disulfide oxidoreductase</fullName>
    </alternativeName>
</protein>
<comment type="function">
    <text evidence="1">Required for disulfide bond formation in some periplasmic proteins. Acts by oxidizing the DsbA protein.</text>
</comment>
<comment type="subcellular location">
    <subcellularLocation>
        <location evidence="1">Cell inner membrane</location>
        <topology evidence="1">Multi-pass membrane protein</topology>
    </subcellularLocation>
</comment>
<comment type="similarity">
    <text evidence="1">Belongs to the DsbB family.</text>
</comment>
<comment type="sequence caution" evidence="2">
    <conflict type="erroneous initiation">
        <sequence resource="EMBL-CDS" id="ABG17940"/>
    </conflict>
</comment>
<dbReference type="EMBL" id="CP000305">
    <property type="protein sequence ID" value="ABG17940.1"/>
    <property type="status" value="ALT_INIT"/>
    <property type="molecule type" value="Genomic_DNA"/>
</dbReference>
<dbReference type="EMBL" id="ACNQ01000009">
    <property type="protein sequence ID" value="EEO77057.1"/>
    <property type="molecule type" value="Genomic_DNA"/>
</dbReference>
<dbReference type="RefSeq" id="WP_002227934.1">
    <property type="nucleotide sequence ID" value="NZ_ACNQ01000009.1"/>
</dbReference>
<dbReference type="SMR" id="Q1CJ90"/>
<dbReference type="GeneID" id="57976524"/>
<dbReference type="KEGG" id="ypn:YPN_1610"/>
<dbReference type="HOGENOM" id="CLU_098660_2_0_6"/>
<dbReference type="Proteomes" id="UP000008936">
    <property type="component" value="Chromosome"/>
</dbReference>
<dbReference type="GO" id="GO:0005886">
    <property type="term" value="C:plasma membrane"/>
    <property type="evidence" value="ECO:0007669"/>
    <property type="project" value="UniProtKB-SubCell"/>
</dbReference>
<dbReference type="GO" id="GO:0009055">
    <property type="term" value="F:electron transfer activity"/>
    <property type="evidence" value="ECO:0007669"/>
    <property type="project" value="UniProtKB-UniRule"/>
</dbReference>
<dbReference type="GO" id="GO:0015035">
    <property type="term" value="F:protein-disulfide reductase activity"/>
    <property type="evidence" value="ECO:0007669"/>
    <property type="project" value="UniProtKB-UniRule"/>
</dbReference>
<dbReference type="GO" id="GO:0006457">
    <property type="term" value="P:protein folding"/>
    <property type="evidence" value="ECO:0007669"/>
    <property type="project" value="InterPro"/>
</dbReference>
<dbReference type="FunFam" id="1.20.1550.10:FF:000001">
    <property type="entry name" value="Disulfide bond formation protein B"/>
    <property type="match status" value="1"/>
</dbReference>
<dbReference type="Gene3D" id="1.20.1550.10">
    <property type="entry name" value="DsbB-like"/>
    <property type="match status" value="1"/>
</dbReference>
<dbReference type="HAMAP" id="MF_00286">
    <property type="entry name" value="DsbB"/>
    <property type="match status" value="1"/>
</dbReference>
<dbReference type="InterPro" id="IPR003752">
    <property type="entry name" value="DiS_bond_form_DsbB/BdbC"/>
</dbReference>
<dbReference type="InterPro" id="IPR022920">
    <property type="entry name" value="Disulphide_bond_form_DsbB"/>
</dbReference>
<dbReference type="InterPro" id="IPR050183">
    <property type="entry name" value="DsbB"/>
</dbReference>
<dbReference type="InterPro" id="IPR023380">
    <property type="entry name" value="DsbB-like_sf"/>
</dbReference>
<dbReference type="NCBIfam" id="NF002485">
    <property type="entry name" value="PRK01749.1"/>
    <property type="match status" value="1"/>
</dbReference>
<dbReference type="PANTHER" id="PTHR36570">
    <property type="entry name" value="DISULFIDE BOND FORMATION PROTEIN B"/>
    <property type="match status" value="1"/>
</dbReference>
<dbReference type="PANTHER" id="PTHR36570:SF2">
    <property type="entry name" value="DISULFIDE BOND FORMATION PROTEIN B"/>
    <property type="match status" value="1"/>
</dbReference>
<dbReference type="Pfam" id="PF02600">
    <property type="entry name" value="DsbB"/>
    <property type="match status" value="1"/>
</dbReference>
<dbReference type="SUPFAM" id="SSF158442">
    <property type="entry name" value="DsbB-like"/>
    <property type="match status" value="1"/>
</dbReference>
<reference key="1">
    <citation type="journal article" date="2006" name="J. Bacteriol.">
        <title>Complete genome sequence of Yersinia pestis strains Antiqua and Nepal516: evidence of gene reduction in an emerging pathogen.</title>
        <authorList>
            <person name="Chain P.S.G."/>
            <person name="Hu P."/>
            <person name="Malfatti S.A."/>
            <person name="Radnedge L."/>
            <person name="Larimer F."/>
            <person name="Vergez L.M."/>
            <person name="Worsham P."/>
            <person name="Chu M.C."/>
            <person name="Andersen G.L."/>
        </authorList>
    </citation>
    <scope>NUCLEOTIDE SEQUENCE [LARGE SCALE GENOMIC DNA]</scope>
    <source>
        <strain>Nepal516</strain>
    </source>
</reference>
<reference key="2">
    <citation type="submission" date="2009-04" db="EMBL/GenBank/DDBJ databases">
        <title>Yersinia pestis Nepal516A whole genome shotgun sequencing project.</title>
        <authorList>
            <person name="Plunkett G. III"/>
            <person name="Anderson B.D."/>
            <person name="Baumler D.J."/>
            <person name="Burland V."/>
            <person name="Cabot E.L."/>
            <person name="Glasner J.D."/>
            <person name="Mau B."/>
            <person name="Neeno-Eckwall E."/>
            <person name="Perna N.T."/>
            <person name="Munk A.C."/>
            <person name="Tapia R."/>
            <person name="Green L.D."/>
            <person name="Rogers Y.C."/>
            <person name="Detter J.C."/>
            <person name="Bruce D.C."/>
            <person name="Brettin T.S."/>
        </authorList>
    </citation>
    <scope>NUCLEOTIDE SEQUENCE [LARGE SCALE GENOMIC DNA]</scope>
    <source>
        <strain>Nepal516</strain>
    </source>
</reference>
<accession>Q1CJ90</accession>
<accession>C4GSP7</accession>
<name>DSBB_YERPN</name>
<keyword id="KW-0997">Cell inner membrane</keyword>
<keyword id="KW-1003">Cell membrane</keyword>
<keyword id="KW-0143">Chaperone</keyword>
<keyword id="KW-1015">Disulfide bond</keyword>
<keyword id="KW-0249">Electron transport</keyword>
<keyword id="KW-0472">Membrane</keyword>
<keyword id="KW-0560">Oxidoreductase</keyword>
<keyword id="KW-0676">Redox-active center</keyword>
<keyword id="KW-0812">Transmembrane</keyword>
<keyword id="KW-1133">Transmembrane helix</keyword>
<keyword id="KW-0813">Transport</keyword>
<proteinExistence type="inferred from homology"/>
<organism>
    <name type="scientific">Yersinia pestis bv. Antiqua (strain Nepal516)</name>
    <dbReference type="NCBI Taxonomy" id="377628"/>
    <lineage>
        <taxon>Bacteria</taxon>
        <taxon>Pseudomonadati</taxon>
        <taxon>Pseudomonadota</taxon>
        <taxon>Gammaproteobacteria</taxon>
        <taxon>Enterobacterales</taxon>
        <taxon>Yersiniaceae</taxon>
        <taxon>Yersinia</taxon>
    </lineage>
</organism>
<gene>
    <name evidence="1" type="primary">dsbB</name>
    <name type="ordered locus">YPN_1610</name>
    <name type="ORF">YP516_1791</name>
</gene>
<evidence type="ECO:0000255" key="1">
    <source>
        <dbReference type="HAMAP-Rule" id="MF_00286"/>
    </source>
</evidence>
<evidence type="ECO:0000305" key="2"/>
<feature type="chain" id="PRO_0000298427" description="Disulfide bond formation protein B">
    <location>
        <begin position="1"/>
        <end position="176"/>
    </location>
</feature>
<feature type="topological domain" description="Cytoplasmic" evidence="1">
    <location>
        <begin position="1"/>
        <end position="14"/>
    </location>
</feature>
<feature type="transmembrane region" description="Helical" evidence="1">
    <location>
        <begin position="15"/>
        <end position="31"/>
    </location>
</feature>
<feature type="topological domain" description="Periplasmic" evidence="1">
    <location>
        <begin position="32"/>
        <end position="49"/>
    </location>
</feature>
<feature type="transmembrane region" description="Helical" evidence="1">
    <location>
        <begin position="50"/>
        <end position="65"/>
    </location>
</feature>
<feature type="topological domain" description="Cytoplasmic" evidence="1">
    <location>
        <begin position="66"/>
        <end position="71"/>
    </location>
</feature>
<feature type="transmembrane region" description="Helical" evidence="1">
    <location>
        <begin position="72"/>
        <end position="89"/>
    </location>
</feature>
<feature type="topological domain" description="Periplasmic" evidence="1">
    <location>
        <begin position="90"/>
        <end position="144"/>
    </location>
</feature>
<feature type="transmembrane region" description="Helical" evidence="1">
    <location>
        <begin position="145"/>
        <end position="163"/>
    </location>
</feature>
<feature type="topological domain" description="Cytoplasmic" evidence="1">
    <location>
        <begin position="164"/>
        <end position="176"/>
    </location>
</feature>
<feature type="disulfide bond" description="Redox-active" evidence="1">
    <location>
        <begin position="41"/>
        <end position="44"/>
    </location>
</feature>
<feature type="disulfide bond" description="Redox-active" evidence="1">
    <location>
        <begin position="104"/>
        <end position="130"/>
    </location>
</feature>
<sequence length="176" mass="20107">MLQFLNRCSRGRGAWLLMALTAFLLELTALYFQHIMLLQPCVMCIYERVALFGILGASLLGAIAPRSPLRYLAIAVWIYSAWKGVQLAWAHTMLQLNPSPFNTCDFFVNFPSWLPLDKWLPAVFAASGDCSERQWQFMSLEMPQWLVGIFAAYLVIAVLVLISQFVKPKRRDLFGR</sequence>